<proteinExistence type="predicted"/>
<reference key="1">
    <citation type="journal article" date="1996" name="Science">
        <title>Complete genome sequence of the methanogenic archaeon, Methanococcus jannaschii.</title>
        <authorList>
            <person name="Bult C.J."/>
            <person name="White O."/>
            <person name="Olsen G.J."/>
            <person name="Zhou L."/>
            <person name="Fleischmann R.D."/>
            <person name="Sutton G.G."/>
            <person name="Blake J.A."/>
            <person name="FitzGerald L.M."/>
            <person name="Clayton R.A."/>
            <person name="Gocayne J.D."/>
            <person name="Kerlavage A.R."/>
            <person name="Dougherty B.A."/>
            <person name="Tomb J.-F."/>
            <person name="Adams M.D."/>
            <person name="Reich C.I."/>
            <person name="Overbeek R."/>
            <person name="Kirkness E.F."/>
            <person name="Weinstock K.G."/>
            <person name="Merrick J.M."/>
            <person name="Glodek A."/>
            <person name="Scott J.L."/>
            <person name="Geoghagen N.S.M."/>
            <person name="Weidman J.F."/>
            <person name="Fuhrmann J.L."/>
            <person name="Nguyen D."/>
            <person name="Utterback T.R."/>
            <person name="Kelley J.M."/>
            <person name="Peterson J.D."/>
            <person name="Sadow P.W."/>
            <person name="Hanna M.C."/>
            <person name="Cotton M.D."/>
            <person name="Roberts K.M."/>
            <person name="Hurst M.A."/>
            <person name="Kaine B.P."/>
            <person name="Borodovsky M."/>
            <person name="Klenk H.-P."/>
            <person name="Fraser C.M."/>
            <person name="Smith H.O."/>
            <person name="Woese C.R."/>
            <person name="Venter J.C."/>
        </authorList>
    </citation>
    <scope>NUCLEOTIDE SEQUENCE [LARGE SCALE GENOMIC DNA]</scope>
    <source>
        <strain>ATCC 43067 / DSM 2661 / JAL-1 / JCM 10045 / NBRC 100440</strain>
    </source>
</reference>
<feature type="chain" id="PRO_0000107278" description="Uncharacterized protein MJ1333">
    <location>
        <begin position="1"/>
        <end position="84"/>
    </location>
</feature>
<feature type="coiled-coil region" evidence="1">
    <location>
        <begin position="5"/>
        <end position="31"/>
    </location>
</feature>
<protein>
    <recommendedName>
        <fullName>Uncharacterized protein MJ1333</fullName>
    </recommendedName>
</protein>
<keyword id="KW-0175">Coiled coil</keyword>
<keyword id="KW-1185">Reference proteome</keyword>
<dbReference type="EMBL" id="L77117">
    <property type="protein sequence ID" value="AAB99345.1"/>
    <property type="molecule type" value="Genomic_DNA"/>
</dbReference>
<dbReference type="PIR" id="D64466">
    <property type="entry name" value="D64466"/>
</dbReference>
<dbReference type="RefSeq" id="WP_010870850.1">
    <property type="nucleotide sequence ID" value="NC_000909.1"/>
</dbReference>
<dbReference type="SMR" id="Q58729"/>
<dbReference type="FunCoup" id="Q58729">
    <property type="interactions" value="1"/>
</dbReference>
<dbReference type="STRING" id="243232.MJ_1333"/>
<dbReference type="PaxDb" id="243232-MJ_1333"/>
<dbReference type="EnsemblBacteria" id="AAB99345">
    <property type="protein sequence ID" value="AAB99345"/>
    <property type="gene ID" value="MJ_1333"/>
</dbReference>
<dbReference type="GeneID" id="1452235"/>
<dbReference type="KEGG" id="mja:MJ_1333"/>
<dbReference type="eggNOG" id="arCOG05077">
    <property type="taxonomic scope" value="Archaea"/>
</dbReference>
<dbReference type="HOGENOM" id="CLU_2519835_0_0_2"/>
<dbReference type="InParanoid" id="Q58729"/>
<dbReference type="OrthoDB" id="64141at2157"/>
<dbReference type="Proteomes" id="UP000000805">
    <property type="component" value="Chromosome"/>
</dbReference>
<accession>Q58729</accession>
<name>Y1333_METJA</name>
<organism>
    <name type="scientific">Methanocaldococcus jannaschii (strain ATCC 43067 / DSM 2661 / JAL-1 / JCM 10045 / NBRC 100440)</name>
    <name type="common">Methanococcus jannaschii</name>
    <dbReference type="NCBI Taxonomy" id="243232"/>
    <lineage>
        <taxon>Archaea</taxon>
        <taxon>Methanobacteriati</taxon>
        <taxon>Methanobacteriota</taxon>
        <taxon>Methanomada group</taxon>
        <taxon>Methanococci</taxon>
        <taxon>Methanococcales</taxon>
        <taxon>Methanocaldococcaceae</taxon>
        <taxon>Methanocaldococcus</taxon>
    </lineage>
</organism>
<evidence type="ECO:0000255" key="1"/>
<sequence length="84" mass="9871">MPSPKIQEIINELDNLMNRERKYIELVATVEYLLNLIEPSKREKFKEALYDAETVEDVYELIKAIKLQLGMQGARRYLLTLEGQ</sequence>
<gene>
    <name type="ordered locus">MJ1333</name>
</gene>